<keyword id="KW-0007">Acetylation</keyword>
<keyword id="KW-0025">Alternative splicing</keyword>
<keyword id="KW-1003">Cell membrane</keyword>
<keyword id="KW-0966">Cell projection</keyword>
<keyword id="KW-0963">Cytoplasm</keyword>
<keyword id="KW-0325">Glycoprotein</keyword>
<keyword id="KW-0472">Membrane</keyword>
<keyword id="KW-0597">Phosphoprotein</keyword>
<keyword id="KW-1267">Proteomics identification</keyword>
<keyword id="KW-1185">Reference proteome</keyword>
<keyword id="KW-0812">Transmembrane</keyword>
<keyword id="KW-1133">Transmembrane helix</keyword>
<protein>
    <recommendedName>
        <fullName>Myelin-associated neurite-outgrowth inhibitor</fullName>
        <shortName>Mani</shortName>
    </recommendedName>
    <alternativeName>
        <fullName>p20</fullName>
    </alternativeName>
</protein>
<accession>A1KXE4</accession>
<accession>Q2TAZ6</accession>
<accession>Q6NZ40</accession>
<reference key="1">
    <citation type="journal article" date="2011" name="J. Cell. Mol. Med.">
        <title>The novel protein MANI modulates neurogenesis and neurite-cone growth.</title>
        <authorList>
            <person name="Mishra M."/>
            <person name="Akatsu H."/>
            <person name="Heese K."/>
        </authorList>
    </citation>
    <scope>NUCLEOTIDE SEQUENCE [MRNA] (ISOFORM 1)</scope>
    <scope>HOMODIMERIZATION</scope>
    <scope>INTERACTION WITH CDC27; PRDX6 AND RBM6</scope>
    <scope>TISSUE SPECIFICITY</scope>
</reference>
<reference key="2">
    <citation type="submission" date="2005-07" db="EMBL/GenBank/DDBJ databases">
        <authorList>
            <person name="Mural R.J."/>
            <person name="Istrail S."/>
            <person name="Sutton G.G."/>
            <person name="Florea L."/>
            <person name="Halpern A.L."/>
            <person name="Mobarry C.M."/>
            <person name="Lippert R."/>
            <person name="Walenz B."/>
            <person name="Shatkay H."/>
            <person name="Dew I."/>
            <person name="Miller J.R."/>
            <person name="Flanigan M.J."/>
            <person name="Edwards N.J."/>
            <person name="Bolanos R."/>
            <person name="Fasulo D."/>
            <person name="Halldorsson B.V."/>
            <person name="Hannenhalli S."/>
            <person name="Turner R."/>
            <person name="Yooseph S."/>
            <person name="Lu F."/>
            <person name="Nusskern D.R."/>
            <person name="Shue B.C."/>
            <person name="Zheng X.H."/>
            <person name="Zhong F."/>
            <person name="Delcher A.L."/>
            <person name="Huson D.H."/>
            <person name="Kravitz S.A."/>
            <person name="Mouchard L."/>
            <person name="Reinert K."/>
            <person name="Remington K.A."/>
            <person name="Clark A.G."/>
            <person name="Waterman M.S."/>
            <person name="Eichler E.E."/>
            <person name="Adams M.D."/>
            <person name="Hunkapiller M.W."/>
            <person name="Myers E.W."/>
            <person name="Venter J.C."/>
        </authorList>
    </citation>
    <scope>NUCLEOTIDE SEQUENCE [LARGE SCALE GENOMIC DNA]</scope>
</reference>
<reference key="3">
    <citation type="journal article" date="2004" name="Genome Res.">
        <title>The status, quality, and expansion of the NIH full-length cDNA project: the Mammalian Gene Collection (MGC).</title>
        <authorList>
            <consortium name="The MGC Project Team"/>
        </authorList>
    </citation>
    <scope>NUCLEOTIDE SEQUENCE [LARGE SCALE MRNA] (ISOFORMS 1 AND 2)</scope>
    <source>
        <tissue>Brain</tissue>
        <tissue>Eye</tissue>
    </source>
</reference>
<reference key="4">
    <citation type="journal article" date="2009" name="Anal. Chem.">
        <title>Lys-N and trypsin cover complementary parts of the phosphoproteome in a refined SCX-based approach.</title>
        <authorList>
            <person name="Gauci S."/>
            <person name="Helbig A.O."/>
            <person name="Slijper M."/>
            <person name="Krijgsveld J."/>
            <person name="Heck A.J."/>
            <person name="Mohammed S."/>
        </authorList>
    </citation>
    <scope>ACETYLATION [LARGE SCALE ANALYSIS] AT MET-1</scope>
    <scope>IDENTIFICATION BY MASS SPECTROMETRY [LARGE SCALE ANALYSIS]</scope>
</reference>
<reference key="5">
    <citation type="journal article" date="2012" name="FEBS Lett.">
        <title>Characterizing the neurite outgrowth inhibitory effect of Mani.</title>
        <authorList>
            <person name="Mishra M."/>
            <person name="Lee S."/>
            <person name="Lin M.K."/>
            <person name="Yamashita T."/>
            <person name="Heese K."/>
        </authorList>
    </citation>
    <scope>INTERACTION WITH DAZAP2; FAM168A; TMTC1 AND YPEL2</scope>
</reference>
<reference key="6">
    <citation type="journal article" date="2013" name="J. Proteome Res.">
        <title>Toward a comprehensive characterization of a human cancer cell phosphoproteome.</title>
        <authorList>
            <person name="Zhou H."/>
            <person name="Di Palma S."/>
            <person name="Preisinger C."/>
            <person name="Peng M."/>
            <person name="Polat A.N."/>
            <person name="Heck A.J."/>
            <person name="Mohammed S."/>
        </authorList>
    </citation>
    <scope>PHOSPHORYLATION [LARGE SCALE ANALYSIS] AT SER-6</scope>
    <scope>IDENTIFICATION BY MASS SPECTROMETRY [LARGE SCALE ANALYSIS]</scope>
    <source>
        <tissue>Erythroleukemia</tissue>
    </source>
</reference>
<name>F168B_HUMAN</name>
<proteinExistence type="evidence at protein level"/>
<dbReference type="EMBL" id="AY253283">
    <property type="protein sequence ID" value="AAP79599.1"/>
    <property type="molecule type" value="mRNA"/>
</dbReference>
<dbReference type="EMBL" id="CH471250">
    <property type="protein sequence ID" value="EAW51267.1"/>
    <property type="molecule type" value="Genomic_DNA"/>
</dbReference>
<dbReference type="EMBL" id="BC066347">
    <property type="protein sequence ID" value="AAH66347.1"/>
    <property type="molecule type" value="mRNA"/>
</dbReference>
<dbReference type="EMBL" id="BC110642">
    <property type="protein sequence ID" value="AAI10643.1"/>
    <property type="molecule type" value="mRNA"/>
</dbReference>
<dbReference type="CCDS" id="CCDS42755.1">
    <molecule id="A1KXE4-1"/>
</dbReference>
<dbReference type="RefSeq" id="NP_001009993.2">
    <molecule id="A1KXE4-1"/>
    <property type="nucleotide sequence ID" value="NM_001009993.4"/>
</dbReference>
<dbReference type="RefSeq" id="NP_001308672.1">
    <molecule id="A1KXE4-1"/>
    <property type="nucleotide sequence ID" value="NM_001321743.1"/>
</dbReference>
<dbReference type="RefSeq" id="NP_001308673.1">
    <molecule id="A1KXE4-1"/>
    <property type="nucleotide sequence ID" value="NM_001321744.1"/>
</dbReference>
<dbReference type="RefSeq" id="NP_001308674.1">
    <molecule id="A1KXE4-1"/>
    <property type="nucleotide sequence ID" value="NM_001321745.1"/>
</dbReference>
<dbReference type="RefSeq" id="NP_001308675.1">
    <molecule id="A1KXE4-1"/>
    <property type="nucleotide sequence ID" value="NM_001321746.2"/>
</dbReference>
<dbReference type="RefSeq" id="NP_001308676.1">
    <molecule id="A1KXE4-1"/>
    <property type="nucleotide sequence ID" value="NM_001321747.2"/>
</dbReference>
<dbReference type="RefSeq" id="NP_001308677.1">
    <molecule id="A1KXE4-1"/>
    <property type="nucleotide sequence ID" value="NM_001321748.2"/>
</dbReference>
<dbReference type="RefSeq" id="XP_016858816.1">
    <molecule id="A1KXE4-1"/>
    <property type="nucleotide sequence ID" value="XM_017003327.2"/>
</dbReference>
<dbReference type="RefSeq" id="XP_047299292.1">
    <molecule id="A1KXE4-1"/>
    <property type="nucleotide sequence ID" value="XM_047443336.1"/>
</dbReference>
<dbReference type="RefSeq" id="XP_047299293.1">
    <molecule id="A1KXE4-1"/>
    <property type="nucleotide sequence ID" value="XM_047443337.1"/>
</dbReference>
<dbReference type="RefSeq" id="XP_047299294.1">
    <molecule id="A1KXE4-1"/>
    <property type="nucleotide sequence ID" value="XM_047443338.1"/>
</dbReference>
<dbReference type="RefSeq" id="XP_047299295.1">
    <molecule id="A1KXE4-1"/>
    <property type="nucleotide sequence ID" value="XM_047443339.1"/>
</dbReference>
<dbReference type="RefSeq" id="XP_054196479.1">
    <molecule id="A1KXE4-1"/>
    <property type="nucleotide sequence ID" value="XM_054340504.1"/>
</dbReference>
<dbReference type="RefSeq" id="XP_054196480.1">
    <molecule id="A1KXE4-1"/>
    <property type="nucleotide sequence ID" value="XM_054340505.1"/>
</dbReference>
<dbReference type="RefSeq" id="XP_054196481.1">
    <molecule id="A1KXE4-1"/>
    <property type="nucleotide sequence ID" value="XM_054340506.1"/>
</dbReference>
<dbReference type="RefSeq" id="XP_054196482.1">
    <molecule id="A1KXE4-1"/>
    <property type="nucleotide sequence ID" value="XM_054340507.1"/>
</dbReference>
<dbReference type="RefSeq" id="XP_054196483.1">
    <molecule id="A1KXE4-1"/>
    <property type="nucleotide sequence ID" value="XM_054340508.1"/>
</dbReference>
<dbReference type="BioGRID" id="126221">
    <property type="interactions" value="57"/>
</dbReference>
<dbReference type="FunCoup" id="A1KXE4">
    <property type="interactions" value="523"/>
</dbReference>
<dbReference type="IntAct" id="A1KXE4">
    <property type="interactions" value="58"/>
</dbReference>
<dbReference type="MINT" id="A1KXE4"/>
<dbReference type="STRING" id="9606.ENSP00000374565"/>
<dbReference type="GlyCosmos" id="A1KXE4">
    <property type="glycosylation" value="1 site, No reported glycans"/>
</dbReference>
<dbReference type="GlyGen" id="A1KXE4">
    <property type="glycosylation" value="1 site"/>
</dbReference>
<dbReference type="iPTMnet" id="A1KXE4"/>
<dbReference type="PhosphoSitePlus" id="A1KXE4"/>
<dbReference type="BioMuta" id="FAM168B"/>
<dbReference type="jPOST" id="A1KXE4"/>
<dbReference type="MassIVE" id="A1KXE4"/>
<dbReference type="PaxDb" id="9606-ENSP00000387051"/>
<dbReference type="PeptideAtlas" id="A1KXE4"/>
<dbReference type="ProteomicsDB" id="124">
    <molecule id="A1KXE4-1"/>
</dbReference>
<dbReference type="ProteomicsDB" id="125">
    <molecule id="A1KXE4-2"/>
</dbReference>
<dbReference type="Pumba" id="A1KXE4"/>
<dbReference type="Antibodypedia" id="50282">
    <property type="antibodies" value="50 antibodies from 14 providers"/>
</dbReference>
<dbReference type="DNASU" id="130074"/>
<dbReference type="Ensembl" id="ENST00000389915.4">
    <molecule id="A1KXE4-1"/>
    <property type="protein sequence ID" value="ENSP00000374565.3"/>
    <property type="gene ID" value="ENSG00000152102.18"/>
</dbReference>
<dbReference type="Ensembl" id="ENST00000409185.5">
    <molecule id="A1KXE4-1"/>
    <property type="protein sequence ID" value="ENSP00000387051.1"/>
    <property type="gene ID" value="ENSG00000152102.18"/>
</dbReference>
<dbReference type="GeneID" id="130074"/>
<dbReference type="KEGG" id="hsa:130074"/>
<dbReference type="MANE-Select" id="ENST00000389915.4">
    <property type="protein sequence ID" value="ENSP00000374565.3"/>
    <property type="RefSeq nucleotide sequence ID" value="NM_001009993.4"/>
    <property type="RefSeq protein sequence ID" value="NP_001009993.2"/>
</dbReference>
<dbReference type="UCSC" id="uc002tsd.4">
    <molecule id="A1KXE4-1"/>
    <property type="organism name" value="human"/>
</dbReference>
<dbReference type="AGR" id="HGNC:27016"/>
<dbReference type="CTD" id="130074"/>
<dbReference type="DisGeNET" id="130074"/>
<dbReference type="GeneCards" id="FAM168B"/>
<dbReference type="HGNC" id="HGNC:27016">
    <property type="gene designation" value="FAM168B"/>
</dbReference>
<dbReference type="HPA" id="ENSG00000152102">
    <property type="expression patterns" value="Low tissue specificity"/>
</dbReference>
<dbReference type="MIM" id="620078">
    <property type="type" value="gene"/>
</dbReference>
<dbReference type="neXtProt" id="NX_A1KXE4"/>
<dbReference type="OpenTargets" id="ENSG00000152102"/>
<dbReference type="PharmGKB" id="PA162387098"/>
<dbReference type="VEuPathDB" id="HostDB:ENSG00000152102"/>
<dbReference type="eggNOG" id="ENOG502QQDS">
    <property type="taxonomic scope" value="Eukaryota"/>
</dbReference>
<dbReference type="GeneTree" id="ENSGT00390000005140"/>
<dbReference type="HOGENOM" id="CLU_065824_1_0_1"/>
<dbReference type="InParanoid" id="A1KXE4"/>
<dbReference type="OMA" id="AMYAPHI"/>
<dbReference type="OrthoDB" id="9893817at2759"/>
<dbReference type="PAN-GO" id="A1KXE4">
    <property type="GO annotations" value="0 GO annotations based on evolutionary models"/>
</dbReference>
<dbReference type="PhylomeDB" id="A1KXE4"/>
<dbReference type="TreeFam" id="TF331128"/>
<dbReference type="PathwayCommons" id="A1KXE4"/>
<dbReference type="SignaLink" id="A1KXE4"/>
<dbReference type="BioGRID-ORCS" id="130074">
    <property type="hits" value="15 hits in 1163 CRISPR screens"/>
</dbReference>
<dbReference type="CD-CODE" id="DEE660B4">
    <property type="entry name" value="Stress granule"/>
</dbReference>
<dbReference type="ChiTaRS" id="FAM168B">
    <property type="organism name" value="human"/>
</dbReference>
<dbReference type="GenomeRNAi" id="130074"/>
<dbReference type="Pharos" id="A1KXE4">
    <property type="development level" value="Tdark"/>
</dbReference>
<dbReference type="PRO" id="PR:A1KXE4"/>
<dbReference type="Proteomes" id="UP000005640">
    <property type="component" value="Chromosome 2"/>
</dbReference>
<dbReference type="RNAct" id="A1KXE4">
    <property type="molecule type" value="protein"/>
</dbReference>
<dbReference type="Bgee" id="ENSG00000152102">
    <property type="expression patterns" value="Expressed in lateral globus pallidus and 212 other cell types or tissues"/>
</dbReference>
<dbReference type="ExpressionAtlas" id="A1KXE4">
    <property type="expression patterns" value="baseline and differential"/>
</dbReference>
<dbReference type="GO" id="GO:0030424">
    <property type="term" value="C:axon"/>
    <property type="evidence" value="ECO:0007669"/>
    <property type="project" value="UniProtKB-SubCell"/>
</dbReference>
<dbReference type="GO" id="GO:0070062">
    <property type="term" value="C:extracellular exosome"/>
    <property type="evidence" value="ECO:0007005"/>
    <property type="project" value="UniProtKB"/>
</dbReference>
<dbReference type="GO" id="GO:0048471">
    <property type="term" value="C:perinuclear region of cytoplasm"/>
    <property type="evidence" value="ECO:0007669"/>
    <property type="project" value="UniProtKB-SubCell"/>
</dbReference>
<dbReference type="GO" id="GO:0005886">
    <property type="term" value="C:plasma membrane"/>
    <property type="evidence" value="ECO:0007669"/>
    <property type="project" value="UniProtKB-SubCell"/>
</dbReference>
<dbReference type="InterPro" id="IPR029247">
    <property type="entry name" value="FAM168A/MANI"/>
</dbReference>
<dbReference type="PANTHER" id="PTHR31844">
    <property type="entry name" value="MYELIN-ASSOCIATED NEURITE-OUTGROWTH INHIBITOR-RELATED"/>
    <property type="match status" value="1"/>
</dbReference>
<dbReference type="Pfam" id="PF14944">
    <property type="entry name" value="TCRP1"/>
    <property type="match status" value="2"/>
</dbReference>
<evidence type="ECO:0000250" key="1">
    <source>
        <dbReference type="UniProtKB" id="D4AEP3"/>
    </source>
</evidence>
<evidence type="ECO:0000250" key="2">
    <source>
        <dbReference type="UniProtKB" id="Q80XQ8"/>
    </source>
</evidence>
<evidence type="ECO:0000255" key="3"/>
<evidence type="ECO:0000269" key="4">
    <source>
    </source>
</evidence>
<evidence type="ECO:0000269" key="5">
    <source>
    </source>
</evidence>
<evidence type="ECO:0000303" key="6">
    <source>
    </source>
</evidence>
<evidence type="ECO:0000305" key="7"/>
<evidence type="ECO:0007744" key="8">
    <source>
    </source>
</evidence>
<evidence type="ECO:0007744" key="9">
    <source>
    </source>
</evidence>
<sequence>MNPVYSPGSSGVPYANAKGIGYPAGFPMGYAAAAPAYSPNMYPGANPTFQTGYTPGTPYKVSCSPTSGAVPPYSSSPNPYQTAVYPVRSAYPQQSPYAQQGTYYTQPLYAAPPHVIHHTTVVQPNGMPATVYPAPIPPPRGNGVTMGMVAGTTMAMSAGTLLTAHSPTPVAPHPVTVPTYRAPGTPTYSYVPPQW</sequence>
<organism>
    <name type="scientific">Homo sapiens</name>
    <name type="common">Human</name>
    <dbReference type="NCBI Taxonomy" id="9606"/>
    <lineage>
        <taxon>Eukaryota</taxon>
        <taxon>Metazoa</taxon>
        <taxon>Chordata</taxon>
        <taxon>Craniata</taxon>
        <taxon>Vertebrata</taxon>
        <taxon>Euteleostomi</taxon>
        <taxon>Mammalia</taxon>
        <taxon>Eutheria</taxon>
        <taxon>Euarchontoglires</taxon>
        <taxon>Primates</taxon>
        <taxon>Haplorrhini</taxon>
        <taxon>Catarrhini</taxon>
        <taxon>Hominidae</taxon>
        <taxon>Homo</taxon>
    </lineage>
</organism>
<feature type="chain" id="PRO_0000325978" description="Myelin-associated neurite-outgrowth inhibitor">
    <location>
        <begin position="1"/>
        <end position="195"/>
    </location>
</feature>
<feature type="topological domain" description="Cytoplasmic" evidence="3">
    <location>
        <begin position="1"/>
        <end position="18"/>
    </location>
</feature>
<feature type="transmembrane region" description="Helical" evidence="3">
    <location>
        <begin position="19"/>
        <end position="42"/>
    </location>
</feature>
<feature type="topological domain" description="Extracellular" evidence="3">
    <location>
        <begin position="43"/>
        <end position="142"/>
    </location>
</feature>
<feature type="transmembrane region" description="Helical" evidence="3">
    <location>
        <begin position="143"/>
        <end position="164"/>
    </location>
</feature>
<feature type="topological domain" description="Cytoplasmic" evidence="3">
    <location>
        <begin position="165"/>
        <end position="195"/>
    </location>
</feature>
<feature type="modified residue" description="N-acetylmethionine" evidence="8">
    <location>
        <position position="1"/>
    </location>
</feature>
<feature type="modified residue" description="Phosphoserine" evidence="9">
    <location>
        <position position="6"/>
    </location>
</feature>
<feature type="glycosylation site" description="N-linked (GlcNAc...) asparagine" evidence="3">
    <location>
        <position position="46"/>
    </location>
</feature>
<feature type="splice variant" id="VSP_032508" description="In isoform 2." evidence="6">
    <original>NPYQTAVYPVRSAYPQQSPYAQQGTYYTQPLYAAPPHVIHHTTVVQPNGMPATVYPAPIPPPRGNGVTMGMVAGTTMAMSAGTLLTAHSPTPVAPHPVTVPTYRAPGTPTYSYVPPQW</original>
    <variation>QAVPMSPCADQWARQLGQISGQPFVLLAGLLCWPHGEALESLMDCN</variation>
    <location>
        <begin position="78"/>
        <end position="195"/>
    </location>
</feature>
<feature type="sequence conflict" description="In Ref. 3; AAI10643." evidence="7" ref="3">
    <original>P</original>
    <variation>L</variation>
    <location>
        <position position="7"/>
    </location>
</feature>
<comment type="function">
    <text evidence="1">Inhibitor of neuronal axonal outgrowth. Acts as a negative regulator of CDC42 and STAT3 and a positive regulator of STMN2. Positive regulator of CDC27.</text>
</comment>
<comment type="subunit">
    <text evidence="4 5">May form homodimers. May interact with DAZAP2, FAM168A, PRDX6, RBM6, TMTC1 and YPEL2. Interacts with CDC27.</text>
</comment>
<comment type="interaction">
    <interactant intactId="EBI-12193763">
        <id>A1KXE4-2</id>
    </interactant>
    <interactant intactId="EBI-727098">
        <id>P21549</id>
        <label>AGXT</label>
    </interactant>
    <organismsDiffer>false</organismsDiffer>
    <experiments>3</experiments>
</comment>
<comment type="interaction">
    <interactant intactId="EBI-12193763">
        <id>A1KXE4-2</id>
    </interactant>
    <interactant intactId="EBI-948603">
        <id>Q03989</id>
        <label>ARID5A</label>
    </interactant>
    <organismsDiffer>false</organismsDiffer>
    <experiments>3</experiments>
</comment>
<comment type="interaction">
    <interactant intactId="EBI-12193763">
        <id>A1KXE4-2</id>
    </interactant>
    <interactant intactId="EBI-747185">
        <id>O95817</id>
        <label>BAG3</label>
    </interactant>
    <organismsDiffer>false</organismsDiffer>
    <experiments>3</experiments>
</comment>
<comment type="interaction">
    <interactant intactId="EBI-12193763">
        <id>A1KXE4-2</id>
    </interactant>
    <interactant intactId="EBI-1383687">
        <id>Q9UQM7</id>
        <label>CAMK2A</label>
    </interactant>
    <organismsDiffer>false</organismsDiffer>
    <experiments>3</experiments>
</comment>
<comment type="interaction">
    <interactant intactId="EBI-12193763">
        <id>A1KXE4-2</id>
    </interactant>
    <interactant intactId="EBI-12010594">
        <id>O75909-2</id>
        <label>CCNK</label>
    </interactant>
    <organismsDiffer>false</organismsDiffer>
    <experiments>3</experiments>
</comment>
<comment type="interaction">
    <interactant intactId="EBI-12193763">
        <id>A1KXE4-2</id>
    </interactant>
    <interactant intactId="EBI-711360">
        <id>P33240</id>
        <label>CSTF2</label>
    </interactant>
    <organismsDiffer>false</organismsDiffer>
    <experiments>3</experiments>
</comment>
<comment type="interaction">
    <interactant intactId="EBI-12193763">
        <id>A1KXE4-2</id>
    </interactant>
    <interactant intactId="EBI-747012">
        <id>Q9H0L4</id>
        <label>CSTF2T</label>
    </interactant>
    <organismsDiffer>false</organismsDiffer>
    <experiments>3</experiments>
</comment>
<comment type="interaction">
    <interactant intactId="EBI-12193763">
        <id>A1KXE4-2</id>
    </interactant>
    <interactant intactId="EBI-1175354">
        <id>Q9H6Z9</id>
        <label>EGLN3</label>
    </interactant>
    <organismsDiffer>false</organismsDiffer>
    <experiments>3</experiments>
</comment>
<comment type="interaction">
    <interactant intactId="EBI-12193763">
        <id>A1KXE4-2</id>
    </interactant>
    <interactant intactId="EBI-11978259">
        <id>Q92567-2</id>
        <label>FAM168A</label>
    </interactant>
    <organismsDiffer>false</organismsDiffer>
    <experiments>3</experiments>
</comment>
<comment type="interaction">
    <interactant intactId="EBI-12193763">
        <id>A1KXE4-2</id>
    </interactant>
    <interactant intactId="EBI-2807642">
        <id>Q8WU58</id>
        <label>FAM222B</label>
    </interactant>
    <organismsDiffer>false</organismsDiffer>
    <experiments>3</experiments>
</comment>
<comment type="interaction">
    <interactant intactId="EBI-12193763">
        <id>A1KXE4-2</id>
    </interactant>
    <interactant intactId="EBI-348399">
        <id>P22607</id>
        <label>FGFR3</label>
    </interactant>
    <organismsDiffer>false</organismsDiffer>
    <experiments>3</experiments>
</comment>
<comment type="interaction">
    <interactant intactId="EBI-12193763">
        <id>A1KXE4-2</id>
    </interactant>
    <interactant intactId="EBI-1759806">
        <id>O75593</id>
        <label>FOXH1</label>
    </interactant>
    <organismsDiffer>false</organismsDiffer>
    <experiments>3</experiments>
</comment>
<comment type="interaction">
    <interactant intactId="EBI-12193763">
        <id>A1KXE4-2</id>
    </interactant>
    <interactant intactId="EBI-12018822">
        <id>Q12951-2</id>
        <label>FOXI1</label>
    </interactant>
    <organismsDiffer>false</organismsDiffer>
    <experiments>3</experiments>
</comment>
<comment type="interaction">
    <interactant intactId="EBI-12193763">
        <id>A1KXE4-2</id>
    </interactant>
    <interactant intactId="EBI-7251368">
        <id>Q9BZE0</id>
        <label>GLIS2</label>
    </interactant>
    <organismsDiffer>false</organismsDiffer>
    <experiments>3</experiments>
</comment>
<comment type="interaction">
    <interactant intactId="EBI-12193763">
        <id>A1KXE4-2</id>
    </interactant>
    <interactant intactId="EBI-713355">
        <id>Q13227</id>
        <label>GPS2</label>
    </interactant>
    <organismsDiffer>false</organismsDiffer>
    <experiments>3</experiments>
</comment>
<comment type="interaction">
    <interactant intactId="EBI-12193763">
        <id>A1KXE4-2</id>
    </interactant>
    <interactant intactId="EBI-745290">
        <id>P17482</id>
        <label>HOXB9</label>
    </interactant>
    <organismsDiffer>false</organismsDiffer>
    <experiments>3</experiments>
</comment>
<comment type="interaction">
    <interactant intactId="EBI-12193763">
        <id>A1KXE4-2</id>
    </interactant>
    <interactant intactId="EBI-12056251">
        <id>Q9ULV5-2</id>
        <label>HSF4</label>
    </interactant>
    <organismsDiffer>false</organismsDiffer>
    <experiments>3</experiments>
</comment>
<comment type="interaction">
    <interactant intactId="EBI-12193763">
        <id>A1KXE4-2</id>
    </interactant>
    <interactant intactId="EBI-948266">
        <id>O14901</id>
        <label>KLF11</label>
    </interactant>
    <organismsDiffer>false</organismsDiffer>
    <experiments>3</experiments>
</comment>
<comment type="interaction">
    <interactant intactId="EBI-12193763">
        <id>A1KXE4-2</id>
    </interactant>
    <interactant intactId="EBI-3957672">
        <id>Q6PEX3</id>
        <label>KRTAP26-1</label>
    </interactant>
    <organismsDiffer>false</organismsDiffer>
    <experiments>3</experiments>
</comment>
<comment type="interaction">
    <interactant intactId="EBI-12193763">
        <id>A1KXE4-2</id>
    </interactant>
    <interactant intactId="EBI-9088686">
        <id>Q14847-2</id>
        <label>LASP1</label>
    </interactant>
    <organismsDiffer>false</organismsDiffer>
    <experiments>3</experiments>
</comment>
<comment type="interaction">
    <interactant intactId="EBI-12193763">
        <id>A1KXE4-2</id>
    </interactant>
    <interactant intactId="EBI-394558">
        <id>Q71SY5</id>
        <label>MED25</label>
    </interactant>
    <organismsDiffer>false</organismsDiffer>
    <experiments>3</experiments>
</comment>
<comment type="interaction">
    <interactant intactId="EBI-12193763">
        <id>A1KXE4-2</id>
    </interactant>
    <interactant intactId="EBI-10699187">
        <id>Q8IXL7-2</id>
        <label>MSRB3</label>
    </interactant>
    <organismsDiffer>false</organismsDiffer>
    <experiments>3</experiments>
</comment>
<comment type="interaction">
    <interactant intactId="EBI-12193763">
        <id>A1KXE4-2</id>
    </interactant>
    <interactant intactId="EBI-5662487">
        <id>Q8TDC0</id>
        <label>MYOZ3</label>
    </interactant>
    <organismsDiffer>false</organismsDiffer>
    <experiments>3</experiments>
</comment>
<comment type="interaction">
    <interactant intactId="EBI-12193763">
        <id>A1KXE4-2</id>
    </interactant>
    <interactant intactId="EBI-11746523">
        <id>Q14511-2</id>
        <label>NEDD9</label>
    </interactant>
    <organismsDiffer>false</organismsDiffer>
    <experiments>3</experiments>
</comment>
<comment type="interaction">
    <interactant intactId="EBI-12193763">
        <id>A1KXE4-2</id>
    </interactant>
    <interactant intactId="EBI-2811583">
        <id>Q9BVL2</id>
        <label>NUP58</label>
    </interactant>
    <organismsDiffer>false</organismsDiffer>
    <experiments>3</experiments>
</comment>
<comment type="interaction">
    <interactant intactId="EBI-12193763">
        <id>A1KXE4-2</id>
    </interactant>
    <interactant intactId="EBI-740446">
        <id>P32242</id>
        <label>OTX1</label>
    </interactant>
    <organismsDiffer>false</organismsDiffer>
    <experiments>3</experiments>
</comment>
<comment type="interaction">
    <interactant intactId="EBI-12193763">
        <id>A1KXE4-2</id>
    </interactant>
    <interactant intactId="EBI-11022007">
        <id>Q9HBE1-4</id>
        <label>PATZ1</label>
    </interactant>
    <organismsDiffer>false</organismsDiffer>
    <experiments>3</experiments>
</comment>
<comment type="interaction">
    <interactant intactId="EBI-12193763">
        <id>A1KXE4-2</id>
    </interactant>
    <interactant intactId="EBI-748265">
        <id>P78337</id>
        <label>PITX1</label>
    </interactant>
    <organismsDiffer>false</organismsDiffer>
    <experiments>3</experiments>
</comment>
<comment type="interaction">
    <interactant intactId="EBI-12193763">
        <id>A1KXE4-2</id>
    </interactant>
    <interactant intactId="EBI-1389308">
        <id>Q7Z3K3</id>
        <label>POGZ</label>
    </interactant>
    <organismsDiffer>false</organismsDiffer>
    <experiments>3</experiments>
</comment>
<comment type="interaction">
    <interactant intactId="EBI-12193763">
        <id>A1KXE4-2</id>
    </interactant>
    <interactant intactId="EBI-11956563">
        <id>Q96HA1-2</id>
        <label>POM121</label>
    </interactant>
    <organismsDiffer>false</organismsDiffer>
    <experiments>3</experiments>
</comment>
<comment type="interaction">
    <interactant intactId="EBI-12193763">
        <id>A1KXE4-2</id>
    </interactant>
    <interactant intactId="EBI-11986293">
        <id>P0CG20</id>
        <label>PRR35</label>
    </interactant>
    <organismsDiffer>false</organismsDiffer>
    <experiments>3</experiments>
</comment>
<comment type="interaction">
    <interactant intactId="EBI-12193763">
        <id>A1KXE4-2</id>
    </interactant>
    <interactant intactId="EBI-744023">
        <id>Q9BTL3</id>
        <label>RAMAC</label>
    </interactant>
    <organismsDiffer>false</organismsDiffer>
    <experiments>3</experiments>
</comment>
<comment type="interaction">
    <interactant intactId="EBI-12193763">
        <id>A1KXE4-2</id>
    </interactant>
    <interactant intactId="EBI-11963050">
        <id>O43251-10</id>
        <label>RBFOX2</label>
    </interactant>
    <organismsDiffer>false</organismsDiffer>
    <experiments>3</experiments>
</comment>
<comment type="interaction">
    <interactant intactId="EBI-12193763">
        <id>A1KXE4-2</id>
    </interactant>
    <interactant intactId="EBI-372094">
        <id>Q9BQY4</id>
        <label>RHOXF2</label>
    </interactant>
    <organismsDiffer>false</organismsDiffer>
    <experiments>3</experiments>
</comment>
<comment type="interaction">
    <interactant intactId="EBI-12193763">
        <id>A1KXE4-2</id>
    </interactant>
    <interactant intactId="EBI-6422642">
        <id>Q01974</id>
        <label>ROR2</label>
    </interactant>
    <organismsDiffer>false</organismsDiffer>
    <experiments>3</experiments>
</comment>
<comment type="interaction">
    <interactant intactId="EBI-12193763">
        <id>A1KXE4-2</id>
    </interactant>
    <interactant intactId="EBI-12148649">
        <id>Q7Z3H4</id>
        <label>SAMD7</label>
    </interactant>
    <organismsDiffer>false</organismsDiffer>
    <experiments>3</experiments>
</comment>
<comment type="interaction">
    <interactant intactId="EBI-12193763">
        <id>A1KXE4-2</id>
    </interactant>
    <interactant intactId="EBI-12000762">
        <id>Q7Z5V6-2</id>
        <label>SAXO4</label>
    </interactant>
    <organismsDiffer>false</organismsDiffer>
    <experiments>3</experiments>
</comment>
<comment type="interaction">
    <interactant intactId="EBI-12193763">
        <id>A1KXE4-2</id>
    </interactant>
    <interactant intactId="EBI-372475">
        <id>P14678-2</id>
        <label>SNRPB</label>
    </interactant>
    <organismsDiffer>false</organismsDiffer>
    <experiments>3</experiments>
</comment>
<comment type="interaction">
    <interactant intactId="EBI-12193763">
        <id>A1KXE4-2</id>
    </interactant>
    <interactant intactId="EBI-766589">
        <id>P09234</id>
        <label>SNRPC</label>
    </interactant>
    <organismsDiffer>false</organismsDiffer>
    <experiments>3</experiments>
</comment>
<comment type="interaction">
    <interactant intactId="EBI-12193763">
        <id>A1KXE4-2</id>
    </interactant>
    <interactant intactId="EBI-11959123">
        <id>Q99932-2</id>
        <label>SPAG8</label>
    </interactant>
    <organismsDiffer>false</organismsDiffer>
    <experiments>3</experiments>
</comment>
<comment type="interaction">
    <interactant intactId="EBI-12193763">
        <id>A1KXE4-2</id>
    </interactant>
    <interactant intactId="EBI-11746252">
        <id>Q9NQB0-10</id>
        <label>TCF7L2</label>
    </interactant>
    <organismsDiffer>false</organismsDiffer>
    <experiments>3</experiments>
</comment>
<comment type="interaction">
    <interactant intactId="EBI-12193763">
        <id>A1KXE4-2</id>
    </interactant>
    <interactant intactId="EBI-752030">
        <id>Q96A09</id>
        <label>TENT5B</label>
    </interactant>
    <organismsDiffer>false</organismsDiffer>
    <experiments>3</experiments>
</comment>
<comment type="interaction">
    <interactant intactId="EBI-12193763">
        <id>A1KXE4-2</id>
    </interactant>
    <interactant intactId="EBI-11064654">
        <id>Q01085-2</id>
        <label>TIAL1</label>
    </interactant>
    <organismsDiffer>false</organismsDiffer>
    <experiments>3</experiments>
</comment>
<comment type="interaction">
    <interactant intactId="EBI-12193763">
        <id>A1KXE4-2</id>
    </interactant>
    <interactant intactId="EBI-11741437">
        <id>Q08117-2</id>
        <label>TLE5</label>
    </interactant>
    <organismsDiffer>false</organismsDiffer>
    <experiments>3</experiments>
</comment>
<comment type="interaction">
    <interactant intactId="EBI-12193763">
        <id>A1KXE4-2</id>
    </interactant>
    <interactant intactId="EBI-3939165">
        <id>O43711</id>
        <label>TLX3</label>
    </interactant>
    <organismsDiffer>false</organismsDiffer>
    <experiments>3</experiments>
</comment>
<comment type="interaction">
    <interactant intactId="EBI-12193763">
        <id>A1KXE4-2</id>
    </interactant>
    <interactant intactId="EBI-2514383">
        <id>Q5T6F2</id>
        <label>UBAP2</label>
    </interactant>
    <organismsDiffer>false</organismsDiffer>
    <experiments>3</experiments>
</comment>
<comment type="interaction">
    <interactant intactId="EBI-12193763">
        <id>A1KXE4-2</id>
    </interactant>
    <interactant intactId="EBI-10191303">
        <id>O95231</id>
        <label>VENTX</label>
    </interactant>
    <organismsDiffer>false</organismsDiffer>
    <experiments>3</experiments>
</comment>
<comment type="interaction">
    <interactant intactId="EBI-12193763">
        <id>A1KXE4-2</id>
    </interactant>
    <interactant intactId="EBI-11980193">
        <id>Q14119</id>
        <label>VEZF1</label>
    </interactant>
    <organismsDiffer>false</organismsDiffer>
    <experiments>3</experiments>
</comment>
<comment type="interaction">
    <interactant intactId="EBI-12193763">
        <id>A1KXE4-2</id>
    </interactant>
    <interactant intactId="EBI-11957216">
        <id>A8MV65-2</id>
        <label>VGLL3</label>
    </interactant>
    <organismsDiffer>false</organismsDiffer>
    <experiments>3</experiments>
</comment>
<comment type="interaction">
    <interactant intactId="EBI-12193763">
        <id>A1KXE4-2</id>
    </interactant>
    <interactant intactId="EBI-2559305">
        <id>A5D8V6</id>
        <label>VPS37C</label>
    </interactant>
    <organismsDiffer>false</organismsDiffer>
    <experiments>3</experiments>
</comment>
<comment type="interaction">
    <interactant intactId="EBI-12193763">
        <id>A1KXE4-2</id>
    </interactant>
    <interactant intactId="EBI-12032042">
        <id>Q64LD2-2</id>
        <label>WDR25</label>
    </interactant>
    <organismsDiffer>false</organismsDiffer>
    <experiments>3</experiments>
</comment>
<comment type="interaction">
    <interactant intactId="EBI-12193763">
        <id>A1KXE4-2</id>
    </interactant>
    <interactant intactId="EBI-742550">
        <id>Q96K80</id>
        <label>ZC3H10</label>
    </interactant>
    <organismsDiffer>false</organismsDiffer>
    <experiments>3</experiments>
</comment>
<comment type="interaction">
    <interactant intactId="EBI-12193763">
        <id>A1KXE4-2</id>
    </interactant>
    <interactant intactId="EBI-11963196">
        <id>Q15915</id>
        <label>ZIC1</label>
    </interactant>
    <organismsDiffer>false</organismsDiffer>
    <experiments>3</experiments>
</comment>
<comment type="subcellular location">
    <subcellularLocation>
        <location evidence="1">Cytoplasm</location>
        <location evidence="1">Perinuclear region</location>
    </subcellularLocation>
    <subcellularLocation>
        <location evidence="2">Cell membrane</location>
        <topology evidence="2">Multi-pass membrane protein</topology>
    </subcellularLocation>
    <subcellularLocation>
        <location evidence="2">Cell projection</location>
        <location evidence="2">Axon</location>
    </subcellularLocation>
    <text evidence="2">Expressed in neuronal cell bodies and axonal fibers.</text>
</comment>
<comment type="alternative products">
    <event type="alternative splicing"/>
    <isoform>
        <id>A1KXE4-1</id>
        <name>1</name>
        <sequence type="displayed"/>
    </isoform>
    <isoform>
        <id>A1KXE4-2</id>
        <name>2</name>
        <sequence type="described" ref="VSP_032508"/>
    </isoform>
</comment>
<comment type="tissue specificity">
    <text evidence="4">Expressed in the brain, within neuronal axonal fibers and associated with myelin sheets (at protein level). Expression tends to be lower in the brain of Alzheimer disease patients compared to healthy individuals (at protein level).</text>
</comment>
<comment type="PTM">
    <text evidence="1">N-glycosylated.</text>
</comment>
<comment type="similarity">
    <text evidence="7">Belongs to the FAM168 family.</text>
</comment>
<gene>
    <name type="primary">FAM168B</name>
    <name type="synonym">KIAA0280L</name>
    <name type="synonym">MANI</name>
</gene>